<gene>
    <name evidence="1" type="primary">rplJ</name>
    <name type="ordered locus">BCQ_0112</name>
</gene>
<comment type="function">
    <text evidence="1">Forms part of the ribosomal stalk, playing a central role in the interaction of the ribosome with GTP-bound translation factors.</text>
</comment>
<comment type="subunit">
    <text evidence="1">Part of the ribosomal stalk of the 50S ribosomal subunit. The N-terminus interacts with L11 and the large rRNA to form the base of the stalk. The C-terminus forms an elongated spine to which L12 dimers bind in a sequential fashion forming a multimeric L10(L12)X complex.</text>
</comment>
<comment type="similarity">
    <text evidence="1">Belongs to the universal ribosomal protein uL10 family.</text>
</comment>
<keyword id="KW-0687">Ribonucleoprotein</keyword>
<keyword id="KW-0689">Ribosomal protein</keyword>
<keyword id="KW-0694">RNA-binding</keyword>
<keyword id="KW-0699">rRNA-binding</keyword>
<name>RL10_BACCQ</name>
<accession>B9IZI3</accession>
<proteinExistence type="inferred from homology"/>
<evidence type="ECO:0000255" key="1">
    <source>
        <dbReference type="HAMAP-Rule" id="MF_00362"/>
    </source>
</evidence>
<evidence type="ECO:0000305" key="2"/>
<reference key="1">
    <citation type="journal article" date="2009" name="J. Bacteriol.">
        <title>Complete genome sequence of the extremophilic Bacillus cereus strain Q1 with industrial applications.</title>
        <authorList>
            <person name="Xiong Z."/>
            <person name="Jiang Y."/>
            <person name="Qi D."/>
            <person name="Lu H."/>
            <person name="Yang F."/>
            <person name="Yang J."/>
            <person name="Chen L."/>
            <person name="Sun L."/>
            <person name="Xu X."/>
            <person name="Xue Y."/>
            <person name="Zhu Y."/>
            <person name="Jin Q."/>
        </authorList>
    </citation>
    <scope>NUCLEOTIDE SEQUENCE [LARGE SCALE GENOMIC DNA]</scope>
    <source>
        <strain>Q1</strain>
    </source>
</reference>
<organism>
    <name type="scientific">Bacillus cereus (strain Q1)</name>
    <dbReference type="NCBI Taxonomy" id="361100"/>
    <lineage>
        <taxon>Bacteria</taxon>
        <taxon>Bacillati</taxon>
        <taxon>Bacillota</taxon>
        <taxon>Bacilli</taxon>
        <taxon>Bacillales</taxon>
        <taxon>Bacillaceae</taxon>
        <taxon>Bacillus</taxon>
        <taxon>Bacillus cereus group</taxon>
    </lineage>
</organism>
<feature type="chain" id="PRO_1000195527" description="Large ribosomal subunit protein uL10">
    <location>
        <begin position="1"/>
        <end position="166"/>
    </location>
</feature>
<dbReference type="EMBL" id="CP000227">
    <property type="protein sequence ID" value="ACM10627.1"/>
    <property type="molecule type" value="Genomic_DNA"/>
</dbReference>
<dbReference type="SMR" id="B9IZI3"/>
<dbReference type="KEGG" id="bcq:BCQ_0112"/>
<dbReference type="HOGENOM" id="CLU_092227_2_0_9"/>
<dbReference type="Proteomes" id="UP000000441">
    <property type="component" value="Chromosome"/>
</dbReference>
<dbReference type="GO" id="GO:0015934">
    <property type="term" value="C:large ribosomal subunit"/>
    <property type="evidence" value="ECO:0007669"/>
    <property type="project" value="InterPro"/>
</dbReference>
<dbReference type="GO" id="GO:0070180">
    <property type="term" value="F:large ribosomal subunit rRNA binding"/>
    <property type="evidence" value="ECO:0007669"/>
    <property type="project" value="UniProtKB-UniRule"/>
</dbReference>
<dbReference type="GO" id="GO:0003735">
    <property type="term" value="F:structural constituent of ribosome"/>
    <property type="evidence" value="ECO:0007669"/>
    <property type="project" value="InterPro"/>
</dbReference>
<dbReference type="GO" id="GO:0006412">
    <property type="term" value="P:translation"/>
    <property type="evidence" value="ECO:0007669"/>
    <property type="project" value="UniProtKB-UniRule"/>
</dbReference>
<dbReference type="CDD" id="cd05797">
    <property type="entry name" value="Ribosomal_L10"/>
    <property type="match status" value="1"/>
</dbReference>
<dbReference type="FunFam" id="3.30.70.1730:FF:000001">
    <property type="entry name" value="50S ribosomal protein L10"/>
    <property type="match status" value="1"/>
</dbReference>
<dbReference type="Gene3D" id="3.30.70.1730">
    <property type="match status" value="1"/>
</dbReference>
<dbReference type="Gene3D" id="6.10.250.290">
    <property type="match status" value="1"/>
</dbReference>
<dbReference type="HAMAP" id="MF_00362">
    <property type="entry name" value="Ribosomal_uL10"/>
    <property type="match status" value="1"/>
</dbReference>
<dbReference type="InterPro" id="IPR001790">
    <property type="entry name" value="Ribosomal_uL10"/>
</dbReference>
<dbReference type="InterPro" id="IPR043141">
    <property type="entry name" value="Ribosomal_uL10-like_sf"/>
</dbReference>
<dbReference type="InterPro" id="IPR022973">
    <property type="entry name" value="Ribosomal_uL10_bac"/>
</dbReference>
<dbReference type="InterPro" id="IPR047865">
    <property type="entry name" value="Ribosomal_uL10_bac_type"/>
</dbReference>
<dbReference type="InterPro" id="IPR002363">
    <property type="entry name" value="Ribosomal_uL10_CS_bac"/>
</dbReference>
<dbReference type="NCBIfam" id="NF000955">
    <property type="entry name" value="PRK00099.1-1"/>
    <property type="match status" value="1"/>
</dbReference>
<dbReference type="PANTHER" id="PTHR11560">
    <property type="entry name" value="39S RIBOSOMAL PROTEIN L10, MITOCHONDRIAL"/>
    <property type="match status" value="1"/>
</dbReference>
<dbReference type="Pfam" id="PF00466">
    <property type="entry name" value="Ribosomal_L10"/>
    <property type="match status" value="1"/>
</dbReference>
<dbReference type="SUPFAM" id="SSF160369">
    <property type="entry name" value="Ribosomal protein L10-like"/>
    <property type="match status" value="1"/>
</dbReference>
<dbReference type="PROSITE" id="PS01109">
    <property type="entry name" value="RIBOSOMAL_L10"/>
    <property type="match status" value="1"/>
</dbReference>
<protein>
    <recommendedName>
        <fullName evidence="1">Large ribosomal subunit protein uL10</fullName>
    </recommendedName>
    <alternativeName>
        <fullName evidence="2">50S ribosomal protein L10</fullName>
    </alternativeName>
</protein>
<sequence length="166" mass="18037">MSKVIETKQQVVTEIADKLRASKSTIVVDYRGLTVSEATELRKQLREAGVEFKVYKNSLTRRAAESAEMAELNEFLTGPNAIAFSNEDVVAPAKVLNDFAKDHEALEIKAGVIEGKLVTLDEVKAIATLPSREGLLSMLLSVLQAPIRNLALATKAVADQKEEQGA</sequence>